<dbReference type="EC" id="3.1.26.5" evidence="1"/>
<dbReference type="EMBL" id="BA000002">
    <property type="protein sequence ID" value="BAA80146.2"/>
    <property type="molecule type" value="Genomic_DNA"/>
</dbReference>
<dbReference type="PIR" id="D72586">
    <property type="entry name" value="D72586"/>
</dbReference>
<dbReference type="SMR" id="Q9YCV1"/>
<dbReference type="STRING" id="272557.APE_1161.1"/>
<dbReference type="EnsemblBacteria" id="BAA80146">
    <property type="protein sequence ID" value="BAA80146"/>
    <property type="gene ID" value="APE_1161.1"/>
</dbReference>
<dbReference type="KEGG" id="ape:APE_1161.1"/>
<dbReference type="eggNOG" id="arCOG01365">
    <property type="taxonomic scope" value="Archaea"/>
</dbReference>
<dbReference type="Proteomes" id="UP000002518">
    <property type="component" value="Chromosome"/>
</dbReference>
<dbReference type="GO" id="GO:0005737">
    <property type="term" value="C:cytoplasm"/>
    <property type="evidence" value="ECO:0007669"/>
    <property type="project" value="UniProtKB-UniRule"/>
</dbReference>
<dbReference type="GO" id="GO:0030677">
    <property type="term" value="C:ribonuclease P complex"/>
    <property type="evidence" value="ECO:0007669"/>
    <property type="project" value="UniProtKB-UniRule"/>
</dbReference>
<dbReference type="GO" id="GO:0004526">
    <property type="term" value="F:ribonuclease P activity"/>
    <property type="evidence" value="ECO:0007669"/>
    <property type="project" value="UniProtKB-UniRule"/>
</dbReference>
<dbReference type="GO" id="GO:0001682">
    <property type="term" value="P:tRNA 5'-leader removal"/>
    <property type="evidence" value="ECO:0007669"/>
    <property type="project" value="UniProtKB-UniRule"/>
</dbReference>
<dbReference type="Gene3D" id="3.30.70.3250">
    <property type="entry name" value="Ribonuclease P, Pop5 subunit"/>
    <property type="match status" value="1"/>
</dbReference>
<dbReference type="HAMAP" id="MF_00755">
    <property type="entry name" value="RNase_P_2"/>
    <property type="match status" value="1"/>
</dbReference>
<dbReference type="InterPro" id="IPR002759">
    <property type="entry name" value="Pop5/Rpp14/Rnp2-like"/>
</dbReference>
<dbReference type="InterPro" id="IPR038085">
    <property type="entry name" value="Rnp2-like_sf"/>
</dbReference>
<dbReference type="InterPro" id="IPR016434">
    <property type="entry name" value="Rnp2_archaea"/>
</dbReference>
<dbReference type="Pfam" id="PF01900">
    <property type="entry name" value="RNase_P_Rpp14"/>
    <property type="match status" value="1"/>
</dbReference>
<dbReference type="PIRSF" id="PIRSF004952">
    <property type="entry name" value="RNase_P_2"/>
    <property type="match status" value="1"/>
</dbReference>
<dbReference type="SUPFAM" id="SSF160350">
    <property type="entry name" value="Rnp2-like"/>
    <property type="match status" value="1"/>
</dbReference>
<evidence type="ECO:0000255" key="1">
    <source>
        <dbReference type="HAMAP-Rule" id="MF_00755"/>
    </source>
</evidence>
<evidence type="ECO:0000305" key="2"/>
<comment type="function">
    <text evidence="1">Part of ribonuclease P, a protein complex that generates mature tRNA molecules by cleaving their 5'-ends.</text>
</comment>
<comment type="catalytic activity">
    <reaction evidence="1">
        <text>Endonucleolytic cleavage of RNA, removing 5'-extranucleotides from tRNA precursor.</text>
        <dbReference type="EC" id="3.1.26.5"/>
    </reaction>
</comment>
<comment type="subunit">
    <text evidence="2">Consists of a catalytic RNA component and at least 4 protein subunits.</text>
</comment>
<comment type="similarity">
    <text evidence="1">Belongs to the eukaryotic/archaeal RNase P protein component 2 family.</text>
</comment>
<feature type="chain" id="PRO_0000140016" description="Ribonuclease P protein component 2">
    <location>
        <begin position="1"/>
        <end position="123"/>
    </location>
</feature>
<keyword id="KW-0378">Hydrolase</keyword>
<keyword id="KW-1185">Reference proteome</keyword>
<keyword id="KW-0819">tRNA processing</keyword>
<accession>Q9YCV1</accession>
<organism>
    <name type="scientific">Aeropyrum pernix (strain ATCC 700893 / DSM 11879 / JCM 9820 / NBRC 100138 / K1)</name>
    <dbReference type="NCBI Taxonomy" id="272557"/>
    <lineage>
        <taxon>Archaea</taxon>
        <taxon>Thermoproteota</taxon>
        <taxon>Thermoprotei</taxon>
        <taxon>Desulfurococcales</taxon>
        <taxon>Desulfurococcaceae</taxon>
        <taxon>Aeropyrum</taxon>
    </lineage>
</organism>
<reference key="1">
    <citation type="journal article" date="1999" name="DNA Res.">
        <title>Complete genome sequence of an aerobic hyper-thermophilic crenarchaeon, Aeropyrum pernix K1.</title>
        <authorList>
            <person name="Kawarabayasi Y."/>
            <person name="Hino Y."/>
            <person name="Horikawa H."/>
            <person name="Yamazaki S."/>
            <person name="Haikawa Y."/>
            <person name="Jin-no K."/>
            <person name="Takahashi M."/>
            <person name="Sekine M."/>
            <person name="Baba S."/>
            <person name="Ankai A."/>
            <person name="Kosugi H."/>
            <person name="Hosoyama A."/>
            <person name="Fukui S."/>
            <person name="Nagai Y."/>
            <person name="Nishijima K."/>
            <person name="Nakazawa H."/>
            <person name="Takamiya M."/>
            <person name="Masuda S."/>
            <person name="Funahashi T."/>
            <person name="Tanaka T."/>
            <person name="Kudoh Y."/>
            <person name="Yamazaki J."/>
            <person name="Kushida N."/>
            <person name="Oguchi A."/>
            <person name="Aoki K."/>
            <person name="Kubota K."/>
            <person name="Nakamura Y."/>
            <person name="Nomura N."/>
            <person name="Sako Y."/>
            <person name="Kikuchi H."/>
        </authorList>
    </citation>
    <scope>NUCLEOTIDE SEQUENCE [LARGE SCALE GENOMIC DNA]</scope>
    <source>
        <strain>ATCC 700893 / DSM 11879 / JCM 9820 / NBRC 100138 / K1</strain>
    </source>
</reference>
<gene>
    <name evidence="1" type="primary">rnp2</name>
    <name type="ordered locus">APE_1161.1</name>
</gene>
<sequence length="123" mass="13491">MRLRRLAGRRPRRRYVAFEVLSLDGPPPGKGEFEEALRGVYLKAFGAESLALARPRIVYYEEESGRGVVAVVRDYRYHILAALGLVRMAGGRRVLVVPLRTSGTVKGALRAFRSPGAPGRGGV</sequence>
<name>RNP2_AERPE</name>
<protein>
    <recommendedName>
        <fullName evidence="1">Ribonuclease P protein component 2</fullName>
        <shortName evidence="1">RNase P component 2</shortName>
        <ecNumber evidence="1">3.1.26.5</ecNumber>
    </recommendedName>
</protein>
<proteinExistence type="inferred from homology"/>